<keyword id="KW-0472">Membrane</keyword>
<keyword id="KW-1185">Reference proteome</keyword>
<keyword id="KW-0812">Transmembrane</keyword>
<keyword id="KW-1133">Transmembrane helix</keyword>
<dbReference type="EMBL" id="AC106782">
    <property type="status" value="NOT_ANNOTATED_CDS"/>
    <property type="molecule type" value="Genomic_DNA"/>
</dbReference>
<dbReference type="CCDS" id="CCDS81968.1"/>
<dbReference type="RefSeq" id="NP_001308821.1">
    <property type="nucleotide sequence ID" value="NM_001321892.3"/>
</dbReference>
<dbReference type="RefSeq" id="NP_001382788.1">
    <property type="nucleotide sequence ID" value="NM_001395859.2"/>
</dbReference>
<dbReference type="RefSeq" id="NP_001382789.1">
    <property type="nucleotide sequence ID" value="NM_001395860.2"/>
</dbReference>
<dbReference type="RefSeq" id="NP_001382790.1">
    <property type="nucleotide sequence ID" value="NM_001395861.2"/>
</dbReference>
<dbReference type="SMR" id="A6NJU9"/>
<dbReference type="FunCoup" id="A6NJU9">
    <property type="interactions" value="12"/>
</dbReference>
<dbReference type="STRING" id="9606.ENSP00000429734"/>
<dbReference type="GlyGen" id="A6NJU9">
    <property type="glycosylation" value="1 site"/>
</dbReference>
<dbReference type="BioMuta" id="NPIPB13"/>
<dbReference type="jPOST" id="A6NJU9"/>
<dbReference type="MassIVE" id="A6NJU9"/>
<dbReference type="PaxDb" id="9606-ENSP00000429734"/>
<dbReference type="PeptideAtlas" id="A6NJU9"/>
<dbReference type="Ensembl" id="ENST00000520915.5">
    <property type="protein sequence ID" value="ENSP00000429734.1"/>
    <property type="gene ID" value="ENSG00000198064.15"/>
</dbReference>
<dbReference type="Ensembl" id="ENST00000697092.1">
    <property type="protein sequence ID" value="ENSP00000513103.1"/>
    <property type="gene ID" value="ENSG00000198064.15"/>
</dbReference>
<dbReference type="GeneID" id="613037"/>
<dbReference type="KEGG" id="hsa:613037"/>
<dbReference type="MANE-Select" id="ENST00000697092.1">
    <property type="protein sequence ID" value="ENSP00000513103.1"/>
    <property type="RefSeq nucleotide sequence ID" value="NM_001395859.2"/>
    <property type="RefSeq protein sequence ID" value="NP_001382788.1"/>
</dbReference>
<dbReference type="UCSC" id="uc010vem.3">
    <property type="organism name" value="human"/>
</dbReference>
<dbReference type="AGR" id="HGNC:41989"/>
<dbReference type="CTD" id="613037"/>
<dbReference type="GeneCards" id="NPIPB13"/>
<dbReference type="HGNC" id="HGNC:41989">
    <property type="gene designation" value="NPIPB13"/>
</dbReference>
<dbReference type="HPA" id="ENSG00000198064">
    <property type="expression patterns" value="Low tissue specificity"/>
</dbReference>
<dbReference type="neXtProt" id="NX_A6NJU9"/>
<dbReference type="VEuPathDB" id="HostDB:ENSG00000198064"/>
<dbReference type="eggNOG" id="ENOG502TDBV">
    <property type="taxonomic scope" value="Eukaryota"/>
</dbReference>
<dbReference type="GeneTree" id="ENSGT00540000072033"/>
<dbReference type="HOGENOM" id="CLU_308511_0_0_1"/>
<dbReference type="InParanoid" id="A6NJU9"/>
<dbReference type="OMA" id="VECPIGP"/>
<dbReference type="OrthoDB" id="9470913at2759"/>
<dbReference type="PAN-GO" id="A6NJU9">
    <property type="GO annotations" value="1 GO annotation based on evolutionary models"/>
</dbReference>
<dbReference type="PhylomeDB" id="A6NJU9"/>
<dbReference type="PathwayCommons" id="A6NJU9"/>
<dbReference type="SignaLink" id="A6NJU9"/>
<dbReference type="BioGRID-ORCS" id="613037">
    <property type="hits" value="0 hits in 8 CRISPR screens"/>
</dbReference>
<dbReference type="ChiTaRS" id="NPIPB13">
    <property type="organism name" value="human"/>
</dbReference>
<dbReference type="GenomeRNAi" id="613037"/>
<dbReference type="Pharos" id="A6NJU9">
    <property type="development level" value="Tdark"/>
</dbReference>
<dbReference type="PRO" id="PR:A6NJU9"/>
<dbReference type="Proteomes" id="UP000005640">
    <property type="component" value="Chromosome 16"/>
</dbReference>
<dbReference type="RNAct" id="A6NJU9">
    <property type="molecule type" value="protein"/>
</dbReference>
<dbReference type="Bgee" id="ENSG00000198064">
    <property type="expression patterns" value="Expressed in sural nerve and 101 other cell types or tissues"/>
</dbReference>
<dbReference type="ExpressionAtlas" id="A6NJU9">
    <property type="expression patterns" value="baseline and differential"/>
</dbReference>
<dbReference type="GO" id="GO:0016020">
    <property type="term" value="C:membrane"/>
    <property type="evidence" value="ECO:0007669"/>
    <property type="project" value="UniProtKB-SubCell"/>
</dbReference>
<dbReference type="InterPro" id="IPR048893">
    <property type="entry name" value="NPB13-like_MII_rpt"/>
</dbReference>
<dbReference type="InterPro" id="IPR009443">
    <property type="entry name" value="NPIP"/>
</dbReference>
<dbReference type="InterPro" id="IPR054697">
    <property type="entry name" value="NPIP_N"/>
</dbReference>
<dbReference type="PANTHER" id="PTHR15438">
    <property type="entry name" value="NUCLEAR PORE COMPLEX INTERACTING PROTEIN"/>
    <property type="match status" value="1"/>
</dbReference>
<dbReference type="PANTHER" id="PTHR15438:SF5">
    <property type="entry name" value="NUCLEAR PORE COMPLEX-INTERACTING PROTEIN FAMILY MEMBER A2-RELATED"/>
    <property type="match status" value="1"/>
</dbReference>
<dbReference type="Pfam" id="PF20885">
    <property type="entry name" value="NPB13-l_MII_rpt"/>
    <property type="match status" value="1"/>
</dbReference>
<dbReference type="Pfam" id="PF06409">
    <property type="entry name" value="NPIP"/>
    <property type="match status" value="1"/>
</dbReference>
<name>NPB13_HUMAN</name>
<feature type="chain" id="PRO_0000343665" description="Nuclear pore complex-interacting protein family member B13">
    <location>
        <begin position="1"/>
        <end position="1138"/>
    </location>
</feature>
<feature type="transmembrane region" description="Helical" evidence="1">
    <location>
        <begin position="73"/>
        <end position="93"/>
    </location>
</feature>
<feature type="region of interest" description="Disordered" evidence="2">
    <location>
        <begin position="242"/>
        <end position="578"/>
    </location>
</feature>
<feature type="region of interest" description="Disordered" evidence="2">
    <location>
        <begin position="747"/>
        <end position="1138"/>
    </location>
</feature>
<feature type="compositionally biased region" description="Polar residues" evidence="2">
    <location>
        <begin position="252"/>
        <end position="263"/>
    </location>
</feature>
<feature type="compositionally biased region" description="Pro residues" evidence="2">
    <location>
        <begin position="349"/>
        <end position="359"/>
    </location>
</feature>
<feature type="compositionally biased region" description="Basic and acidic residues" evidence="2">
    <location>
        <begin position="406"/>
        <end position="416"/>
    </location>
</feature>
<feature type="compositionally biased region" description="Basic and acidic residues" evidence="2">
    <location>
        <begin position="448"/>
        <end position="458"/>
    </location>
</feature>
<feature type="compositionally biased region" description="Basic and acidic residues" evidence="2">
    <location>
        <begin position="490"/>
        <end position="500"/>
    </location>
</feature>
<feature type="compositionally biased region" description="Basic and acidic residues" evidence="2">
    <location>
        <begin position="532"/>
        <end position="542"/>
    </location>
</feature>
<feature type="compositionally biased region" description="Basic and acidic residues" evidence="2">
    <location>
        <begin position="782"/>
        <end position="792"/>
    </location>
</feature>
<feature type="compositionally biased region" description="Basic and acidic residues" evidence="2">
    <location>
        <begin position="824"/>
        <end position="834"/>
    </location>
</feature>
<feature type="compositionally biased region" description="Basic and acidic residues" evidence="2">
    <location>
        <begin position="866"/>
        <end position="876"/>
    </location>
</feature>
<feature type="compositionally biased region" description="Basic and acidic residues" evidence="2">
    <location>
        <begin position="908"/>
        <end position="918"/>
    </location>
</feature>
<feature type="compositionally biased region" description="Basic and acidic residues" evidence="2">
    <location>
        <begin position="950"/>
        <end position="960"/>
    </location>
</feature>
<feature type="compositionally biased region" description="Basic and acidic residues" evidence="2">
    <location>
        <begin position="992"/>
        <end position="1002"/>
    </location>
</feature>
<sequence>MVKLSIVLTPQFLSHDQGQLTKELQQHVKSVTCPCEYLRKVINTLADHHHRGTDFGGSPWLHVIIAFPTSYKVVITLWIVYLWVSLLKTIFWSRNGHDGSTDVQQRAWRSNRRRQEGLRSICMHTKKRVSSFRGNKIGLKDVITLRRHVETKVRAKIRKRKVTTKINHHDKINGKRKTARKQKMFQRAQELRRRAEDYHKCKIPPSARKALCNWVRMAAAEHRHSSGLPYWPYLTAETLKNRMGHQPPPPTQQHSITDNSLSLKTPPECVLTPLPPSADDNLKTPPECVLTPLPPSADDNLKTPPECLLTPLPPSADDNLKTPPECLLTPLPPSADDNLKTPPECLLTPLPPSAPPSAPPSADDNLKTRAECLLHPLPPSADDNLKTPSERQLTPLPPSAPPSADDNIKTPAERLRGPLPPSADDNLKTPSERQLTPLPPSAPPSADDNIKTPAERLRGPLPPSADDNLKTPSERQLTPLPPSAPPSADDNIKTPAERLRGPLPPSADDNLKTPSERQLTPLPPSAPPSADDNIKTPAERLRGPLPPSADDNLKTPSERQLTPLPPSAPPSADDNIKTPAFHPQRMIISRHLPSVSSLPFHPQLHSQQMIISRYLLSVCGFRFHHQPMIISRHLPSVSSLPFHPQLHPQQMIISRHLPSVCGGRFHPQRMIISRHLPSVSSLPFHPQLHPQQMIISRHLPSVCGGRFHPQRMIISRHLPSVSSLPFHPQLHPQQMIISRHLPSVCGERLRGPLPPSADDNLKTPSERQLTPLPPSAPPSADDNIKTPAERLRRPLPPSADDNLKTPSERQLTPLPPSAPPSADDNIKTPAERLRGPLPPSADDNLKTPSERQLTPLPPSAPPSADDNIKTPAERLRGPLPPSADDNLKTPSERQLTPLPPSAPPSADDNIKTPAERLRGPLPPSADDNLKTPSERQLTPLPPSAPPSADDNIKTPAERLRGPLPPSADDNLKTPSERQLTPLPPSAPPSADDNIKTPAERLRGPLPPSADDNLKTPPLATQEAEAEKPRKPKRQRAAEMEPPPEPKRRRVGDVEPSRKPKRRRAADVEPSSPKPKRRRVGDVEPSRKPKRRRAADVEPSSPEPKRRRVGDVEPSRKPKRRRAADVEPSSPEPKRRRLS</sequence>
<accession>A6NJU9</accession>
<gene>
    <name evidence="4" type="primary">NPIPB13</name>
</gene>
<reference key="1">
    <citation type="journal article" date="2004" name="Nature">
        <title>The sequence and analysis of duplication-rich human chromosome 16.</title>
        <authorList>
            <person name="Martin J."/>
            <person name="Han C."/>
            <person name="Gordon L.A."/>
            <person name="Terry A."/>
            <person name="Prabhakar S."/>
            <person name="She X."/>
            <person name="Xie G."/>
            <person name="Hellsten U."/>
            <person name="Chan Y.M."/>
            <person name="Altherr M."/>
            <person name="Couronne O."/>
            <person name="Aerts A."/>
            <person name="Bajorek E."/>
            <person name="Black S."/>
            <person name="Blumer H."/>
            <person name="Branscomb E."/>
            <person name="Brown N.C."/>
            <person name="Bruno W.J."/>
            <person name="Buckingham J.M."/>
            <person name="Callen D.F."/>
            <person name="Campbell C.S."/>
            <person name="Campbell M.L."/>
            <person name="Campbell E.W."/>
            <person name="Caoile C."/>
            <person name="Challacombe J.F."/>
            <person name="Chasteen L.A."/>
            <person name="Chertkov O."/>
            <person name="Chi H.C."/>
            <person name="Christensen M."/>
            <person name="Clark L.M."/>
            <person name="Cohn J.D."/>
            <person name="Denys M."/>
            <person name="Detter J.C."/>
            <person name="Dickson M."/>
            <person name="Dimitrijevic-Bussod M."/>
            <person name="Escobar J."/>
            <person name="Fawcett J.J."/>
            <person name="Flowers D."/>
            <person name="Fotopulos D."/>
            <person name="Glavina T."/>
            <person name="Gomez M."/>
            <person name="Gonzales E."/>
            <person name="Goodstein D."/>
            <person name="Goodwin L.A."/>
            <person name="Grady D.L."/>
            <person name="Grigoriev I."/>
            <person name="Groza M."/>
            <person name="Hammon N."/>
            <person name="Hawkins T."/>
            <person name="Haydu L."/>
            <person name="Hildebrand C.E."/>
            <person name="Huang W."/>
            <person name="Israni S."/>
            <person name="Jett J."/>
            <person name="Jewett P.B."/>
            <person name="Kadner K."/>
            <person name="Kimball H."/>
            <person name="Kobayashi A."/>
            <person name="Krawczyk M.-C."/>
            <person name="Leyba T."/>
            <person name="Longmire J.L."/>
            <person name="Lopez F."/>
            <person name="Lou Y."/>
            <person name="Lowry S."/>
            <person name="Ludeman T."/>
            <person name="Manohar C.F."/>
            <person name="Mark G.A."/>
            <person name="McMurray K.L."/>
            <person name="Meincke L.J."/>
            <person name="Morgan J."/>
            <person name="Moyzis R.K."/>
            <person name="Mundt M.O."/>
            <person name="Munk A.C."/>
            <person name="Nandkeshwar R.D."/>
            <person name="Pitluck S."/>
            <person name="Pollard M."/>
            <person name="Predki P."/>
            <person name="Parson-Quintana B."/>
            <person name="Ramirez L."/>
            <person name="Rash S."/>
            <person name="Retterer J."/>
            <person name="Ricke D.O."/>
            <person name="Robinson D.L."/>
            <person name="Rodriguez A."/>
            <person name="Salamov A."/>
            <person name="Saunders E.H."/>
            <person name="Scott D."/>
            <person name="Shough T."/>
            <person name="Stallings R.L."/>
            <person name="Stalvey M."/>
            <person name="Sutherland R.D."/>
            <person name="Tapia R."/>
            <person name="Tesmer J.G."/>
            <person name="Thayer N."/>
            <person name="Thompson L.S."/>
            <person name="Tice H."/>
            <person name="Torney D.C."/>
            <person name="Tran-Gyamfi M."/>
            <person name="Tsai M."/>
            <person name="Ulanovsky L.E."/>
            <person name="Ustaszewska A."/>
            <person name="Vo N."/>
            <person name="White P.S."/>
            <person name="Williams A.L."/>
            <person name="Wills P.L."/>
            <person name="Wu J.-R."/>
            <person name="Wu K."/>
            <person name="Yang J."/>
            <person name="DeJong P."/>
            <person name="Bruce D."/>
            <person name="Doggett N.A."/>
            <person name="Deaven L."/>
            <person name="Schmutz J."/>
            <person name="Grimwood J."/>
            <person name="Richardson P."/>
            <person name="Rokhsar D.S."/>
            <person name="Eichler E.E."/>
            <person name="Gilna P."/>
            <person name="Lucas S.M."/>
            <person name="Myers R.M."/>
            <person name="Rubin E.M."/>
            <person name="Pennacchio L.A."/>
        </authorList>
    </citation>
    <scope>NUCLEOTIDE SEQUENCE [LARGE SCALE GENOMIC DNA]</scope>
</reference>
<organism>
    <name type="scientific">Homo sapiens</name>
    <name type="common">Human</name>
    <dbReference type="NCBI Taxonomy" id="9606"/>
    <lineage>
        <taxon>Eukaryota</taxon>
        <taxon>Metazoa</taxon>
        <taxon>Chordata</taxon>
        <taxon>Craniata</taxon>
        <taxon>Vertebrata</taxon>
        <taxon>Euteleostomi</taxon>
        <taxon>Mammalia</taxon>
        <taxon>Eutheria</taxon>
        <taxon>Euarchontoglires</taxon>
        <taxon>Primates</taxon>
        <taxon>Haplorrhini</taxon>
        <taxon>Catarrhini</taxon>
        <taxon>Hominidae</taxon>
        <taxon>Homo</taxon>
    </lineage>
</organism>
<protein>
    <recommendedName>
        <fullName evidence="4">Nuclear pore complex-interacting protein family member B13</fullName>
    </recommendedName>
</protein>
<comment type="subcellular location">
    <subcellularLocation>
        <location evidence="1">Membrane</location>
        <topology evidence="1">Single-pass membrane protein</topology>
    </subcellularLocation>
</comment>
<comment type="similarity">
    <text evidence="3">Belongs to the NPIP family.</text>
</comment>
<proteinExistence type="inferred from homology"/>
<evidence type="ECO:0000255" key="1"/>
<evidence type="ECO:0000256" key="2">
    <source>
        <dbReference type="SAM" id="MobiDB-lite"/>
    </source>
</evidence>
<evidence type="ECO:0000305" key="3"/>
<evidence type="ECO:0000312" key="4">
    <source>
        <dbReference type="HGNC" id="HGNC:41989"/>
    </source>
</evidence>